<reference key="1">
    <citation type="journal article" date="2005" name="Nature">
        <title>The genome sequence of the rice blast fungus Magnaporthe grisea.</title>
        <authorList>
            <person name="Dean R.A."/>
            <person name="Talbot N.J."/>
            <person name="Ebbole D.J."/>
            <person name="Farman M.L."/>
            <person name="Mitchell T.K."/>
            <person name="Orbach M.J."/>
            <person name="Thon M.R."/>
            <person name="Kulkarni R."/>
            <person name="Xu J.-R."/>
            <person name="Pan H."/>
            <person name="Read N.D."/>
            <person name="Lee Y.-H."/>
            <person name="Carbone I."/>
            <person name="Brown D."/>
            <person name="Oh Y.Y."/>
            <person name="Donofrio N."/>
            <person name="Jeong J.S."/>
            <person name="Soanes D.M."/>
            <person name="Djonovic S."/>
            <person name="Kolomiets E."/>
            <person name="Rehmeyer C."/>
            <person name="Li W."/>
            <person name="Harding M."/>
            <person name="Kim S."/>
            <person name="Lebrun M.-H."/>
            <person name="Bohnert H."/>
            <person name="Coughlan S."/>
            <person name="Butler J."/>
            <person name="Calvo S.E."/>
            <person name="Ma L.-J."/>
            <person name="Nicol R."/>
            <person name="Purcell S."/>
            <person name="Nusbaum C."/>
            <person name="Galagan J.E."/>
            <person name="Birren B.W."/>
        </authorList>
    </citation>
    <scope>NUCLEOTIDE SEQUENCE [LARGE SCALE GENOMIC DNA]</scope>
    <source>
        <strain>70-15 / ATCC MYA-4617 / FGSC 8958</strain>
    </source>
</reference>
<dbReference type="EC" id="3.2.1.8"/>
<dbReference type="EMBL" id="CM001233">
    <property type="protein sequence ID" value="EHA53393.1"/>
    <property type="molecule type" value="Genomic_DNA"/>
</dbReference>
<dbReference type="RefSeq" id="XP_003713200.1">
    <property type="nucleotide sequence ID" value="XM_003713152.1"/>
</dbReference>
<dbReference type="SMR" id="P0CT49"/>
<dbReference type="STRING" id="242507.P0CT49"/>
<dbReference type="GlyCosmos" id="P0CT49">
    <property type="glycosylation" value="1 site, No reported glycans"/>
</dbReference>
<dbReference type="EnsemblFungi" id="MGG_07955T0">
    <property type="protein sequence ID" value="MGG_07955T0"/>
    <property type="gene ID" value="MGG_07955"/>
</dbReference>
<dbReference type="GeneID" id="2683882"/>
<dbReference type="KEGG" id="mgr:MGG_07955"/>
<dbReference type="VEuPathDB" id="FungiDB:MGG_07955"/>
<dbReference type="eggNOG" id="ENOG502RXA7">
    <property type="taxonomic scope" value="Eukaryota"/>
</dbReference>
<dbReference type="HOGENOM" id="CLU_052631_0_0_1"/>
<dbReference type="InParanoid" id="P0CT49"/>
<dbReference type="OMA" id="FKQFWAI"/>
<dbReference type="OrthoDB" id="2115822at2759"/>
<dbReference type="UniPathway" id="UPA00114"/>
<dbReference type="PHI-base" id="PHI:123400"/>
<dbReference type="PHI-base" id="PHI:2213"/>
<dbReference type="Proteomes" id="UP000009058">
    <property type="component" value="Chromosome 3"/>
</dbReference>
<dbReference type="GO" id="GO:0005576">
    <property type="term" value="C:extracellular region"/>
    <property type="evidence" value="ECO:0007669"/>
    <property type="project" value="UniProtKB-SubCell"/>
</dbReference>
<dbReference type="GO" id="GO:0031176">
    <property type="term" value="F:endo-1,4-beta-xylanase activity"/>
    <property type="evidence" value="ECO:0007669"/>
    <property type="project" value="UniProtKB-EC"/>
</dbReference>
<dbReference type="GO" id="GO:0045493">
    <property type="term" value="P:xylan catabolic process"/>
    <property type="evidence" value="ECO:0007669"/>
    <property type="project" value="UniProtKB-UniPathway"/>
</dbReference>
<dbReference type="FunFam" id="2.60.120.180:FF:000001">
    <property type="entry name" value="Endo-1,4-beta-xylanase"/>
    <property type="match status" value="1"/>
</dbReference>
<dbReference type="Gene3D" id="2.60.120.180">
    <property type="match status" value="1"/>
</dbReference>
<dbReference type="InterPro" id="IPR013320">
    <property type="entry name" value="ConA-like_dom_sf"/>
</dbReference>
<dbReference type="InterPro" id="IPR013319">
    <property type="entry name" value="GH11/12"/>
</dbReference>
<dbReference type="InterPro" id="IPR018208">
    <property type="entry name" value="GH11_AS_1"/>
</dbReference>
<dbReference type="InterPro" id="IPR033119">
    <property type="entry name" value="GH11_AS_2"/>
</dbReference>
<dbReference type="InterPro" id="IPR033123">
    <property type="entry name" value="GH11_dom"/>
</dbReference>
<dbReference type="InterPro" id="IPR001137">
    <property type="entry name" value="Glyco_hydro_11"/>
</dbReference>
<dbReference type="PANTHER" id="PTHR46828">
    <property type="entry name" value="ENDO-1,4-BETA-XYLANASE A-RELATED"/>
    <property type="match status" value="1"/>
</dbReference>
<dbReference type="PANTHER" id="PTHR46828:SF2">
    <property type="entry name" value="ENDO-1,4-BETA-XYLANASE A-RELATED"/>
    <property type="match status" value="1"/>
</dbReference>
<dbReference type="Pfam" id="PF00457">
    <property type="entry name" value="Glyco_hydro_11"/>
    <property type="match status" value="1"/>
</dbReference>
<dbReference type="PRINTS" id="PR00911">
    <property type="entry name" value="GLHYDRLASE11"/>
</dbReference>
<dbReference type="SUPFAM" id="SSF49899">
    <property type="entry name" value="Concanavalin A-like lectins/glucanases"/>
    <property type="match status" value="1"/>
</dbReference>
<dbReference type="PROSITE" id="PS00776">
    <property type="entry name" value="GH11_1"/>
    <property type="match status" value="1"/>
</dbReference>
<dbReference type="PROSITE" id="PS00777">
    <property type="entry name" value="GH11_2"/>
    <property type="match status" value="1"/>
</dbReference>
<dbReference type="PROSITE" id="PS51761">
    <property type="entry name" value="GH11_3"/>
    <property type="match status" value="1"/>
</dbReference>
<sequence>MVSFTSIVTAVVALAGSALAIPAPDGNMTGFPFEQLMRRQSTPSSTGRHNGYYYSWWTDGASPVQYQNGNGGSYSVQWQSGGNFVGGKGWMPGGSKSITYSGTFNPVNNGNAYLCIYGWTQNPLVEYYILENYGEYNPGNSAQSRGTLQAAGGTYTLHESTRVNQPSIEGTRTFQQYWAIRQQKRNSGTVNTGEFFQAWERAGMRMGNHNYMIVATEGYRSAGNSNINVQTPA</sequence>
<feature type="signal peptide" evidence="2">
    <location>
        <begin position="1"/>
        <end position="20"/>
    </location>
</feature>
<feature type="chain" id="PRO_0000008008" description="Endo-1,4-beta-xylanase 1">
    <location>
        <begin position="21"/>
        <end position="233"/>
    </location>
</feature>
<feature type="domain" description="GH11" evidence="3">
    <location>
        <begin position="40"/>
        <end position="230"/>
    </location>
</feature>
<feature type="active site" description="Nucleophile" evidence="4">
    <location>
        <position position="126"/>
    </location>
</feature>
<feature type="active site" description="Proton donor" evidence="5">
    <location>
        <position position="217"/>
    </location>
</feature>
<feature type="glycosylation site" description="N-linked (GlcNAc...) asparagine" evidence="2">
    <location>
        <position position="27"/>
    </location>
</feature>
<organism>
    <name type="scientific">Pyricularia oryzae (strain 70-15 / ATCC MYA-4617 / FGSC 8958)</name>
    <name type="common">Rice blast fungus</name>
    <name type="synonym">Magnaporthe oryzae</name>
    <dbReference type="NCBI Taxonomy" id="242507"/>
    <lineage>
        <taxon>Eukaryota</taxon>
        <taxon>Fungi</taxon>
        <taxon>Dikarya</taxon>
        <taxon>Ascomycota</taxon>
        <taxon>Pezizomycotina</taxon>
        <taxon>Sordariomycetes</taxon>
        <taxon>Sordariomycetidae</taxon>
        <taxon>Magnaporthales</taxon>
        <taxon>Pyriculariaceae</taxon>
        <taxon>Pyricularia</taxon>
    </lineage>
</organism>
<accession>P0CT49</accession>
<accession>A4QZG4</accession>
<accession>G4N2U4</accession>
<accession>P55335</accession>
<accession>Q01171</accession>
<name>XYN1_PYRO7</name>
<proteinExistence type="inferred from homology"/>
<gene>
    <name type="primary">XYL1</name>
    <name type="synonym">XYN22</name>
    <name type="ORF">MGG_07955</name>
</gene>
<evidence type="ECO:0000250" key="1"/>
<evidence type="ECO:0000255" key="2"/>
<evidence type="ECO:0000255" key="3">
    <source>
        <dbReference type="PROSITE-ProRule" id="PRU01097"/>
    </source>
</evidence>
<evidence type="ECO:0000255" key="4">
    <source>
        <dbReference type="PROSITE-ProRule" id="PRU10062"/>
    </source>
</evidence>
<evidence type="ECO:0000255" key="5">
    <source>
        <dbReference type="PROSITE-ProRule" id="PRU10063"/>
    </source>
</evidence>
<evidence type="ECO:0000305" key="6"/>
<comment type="function">
    <text evidence="1">Endo-1,4-beta-xylanase involved in the hydrolysis of xylan, a major structural heterogeneous polysaccharide found in plant biomass representing the second most abundant polysaccharide in the biosphere, after cellulose. Accounts for approximately 70 percent of the endoxylanase activity in the culture filtrate (By similarity).</text>
</comment>
<comment type="catalytic activity">
    <reaction>
        <text>Endohydrolysis of (1-&gt;4)-beta-D-xylosidic linkages in xylans.</text>
        <dbReference type="EC" id="3.2.1.8"/>
    </reaction>
</comment>
<comment type="pathway">
    <text>Glycan degradation; xylan degradation.</text>
</comment>
<comment type="subcellular location">
    <subcellularLocation>
        <location evidence="1">Secreted</location>
    </subcellularLocation>
</comment>
<comment type="similarity">
    <text evidence="6">Belongs to the glycosyl hydrolase 11 (cellulase G) family.</text>
</comment>
<protein>
    <recommendedName>
        <fullName>Endo-1,4-beta-xylanase 1</fullName>
        <shortName>Xylanase 1</shortName>
        <ecNumber>3.2.1.8</ecNumber>
    </recommendedName>
    <alternativeName>
        <fullName>1,4-beta-D-xylan xylanohydrolase 1</fullName>
    </alternativeName>
    <alternativeName>
        <fullName>Xylanase 22</fullName>
    </alternativeName>
</protein>
<keyword id="KW-0119">Carbohydrate metabolism</keyword>
<keyword id="KW-0325">Glycoprotein</keyword>
<keyword id="KW-0326">Glycosidase</keyword>
<keyword id="KW-0378">Hydrolase</keyword>
<keyword id="KW-0624">Polysaccharide degradation</keyword>
<keyword id="KW-1185">Reference proteome</keyword>
<keyword id="KW-0964">Secreted</keyword>
<keyword id="KW-0732">Signal</keyword>
<keyword id="KW-0858">Xylan degradation</keyword>